<gene>
    <name evidence="1" type="primary">hemA</name>
    <name type="ordered locus">APP7_0428</name>
</gene>
<name>HEM1_ACTP7</name>
<comment type="function">
    <text evidence="1">Catalyzes the NADPH-dependent reduction of glutamyl-tRNA(Glu) to glutamate 1-semialdehyde (GSA).</text>
</comment>
<comment type="catalytic activity">
    <reaction evidence="1">
        <text>(S)-4-amino-5-oxopentanoate + tRNA(Glu) + NADP(+) = L-glutamyl-tRNA(Glu) + NADPH + H(+)</text>
        <dbReference type="Rhea" id="RHEA:12344"/>
        <dbReference type="Rhea" id="RHEA-COMP:9663"/>
        <dbReference type="Rhea" id="RHEA-COMP:9680"/>
        <dbReference type="ChEBI" id="CHEBI:15378"/>
        <dbReference type="ChEBI" id="CHEBI:57501"/>
        <dbReference type="ChEBI" id="CHEBI:57783"/>
        <dbReference type="ChEBI" id="CHEBI:58349"/>
        <dbReference type="ChEBI" id="CHEBI:78442"/>
        <dbReference type="ChEBI" id="CHEBI:78520"/>
        <dbReference type="EC" id="1.2.1.70"/>
    </reaction>
</comment>
<comment type="pathway">
    <text evidence="1">Porphyrin-containing compound metabolism; protoporphyrin-IX biosynthesis; 5-aminolevulinate from L-glutamyl-tRNA(Glu): step 1/2.</text>
</comment>
<comment type="subunit">
    <text evidence="1">Homodimer.</text>
</comment>
<comment type="domain">
    <text evidence="1">Possesses an unusual extended V-shaped dimeric structure with each monomer consisting of three distinct domains arranged along a curved 'spinal' alpha-helix. The N-terminal catalytic domain specifically recognizes the glutamate moiety of the substrate. The second domain is the NADPH-binding domain, and the third C-terminal domain is responsible for dimerization.</text>
</comment>
<comment type="miscellaneous">
    <text evidence="1">During catalysis, the active site Cys acts as a nucleophile attacking the alpha-carbonyl group of tRNA-bound glutamate with the formation of a thioester intermediate between enzyme and glutamate, and the concomitant release of tRNA(Glu). The thioester intermediate is finally reduced by direct hydride transfer from NADPH, to form the product GSA.</text>
</comment>
<comment type="similarity">
    <text evidence="1">Belongs to the glutamyl-tRNA reductase family.</text>
</comment>
<accession>B3H0R8</accession>
<feature type="chain" id="PRO_1000093110" description="Glutamyl-tRNA reductase">
    <location>
        <begin position="1"/>
        <end position="436"/>
    </location>
</feature>
<feature type="active site" description="Nucleophile" evidence="1">
    <location>
        <position position="50"/>
    </location>
</feature>
<feature type="binding site" evidence="1">
    <location>
        <begin position="49"/>
        <end position="52"/>
    </location>
    <ligand>
        <name>substrate</name>
    </ligand>
</feature>
<feature type="binding site" evidence="1">
    <location>
        <position position="118"/>
    </location>
    <ligand>
        <name>substrate</name>
    </ligand>
</feature>
<feature type="binding site" evidence="1">
    <location>
        <begin position="123"/>
        <end position="125"/>
    </location>
    <ligand>
        <name>substrate</name>
    </ligand>
</feature>
<feature type="binding site" evidence="1">
    <location>
        <position position="129"/>
    </location>
    <ligand>
        <name>substrate</name>
    </ligand>
</feature>
<feature type="binding site" evidence="1">
    <location>
        <begin position="203"/>
        <end position="208"/>
    </location>
    <ligand>
        <name>NADP(+)</name>
        <dbReference type="ChEBI" id="CHEBI:58349"/>
    </ligand>
</feature>
<feature type="site" description="Important for activity" evidence="1">
    <location>
        <position position="108"/>
    </location>
</feature>
<protein>
    <recommendedName>
        <fullName evidence="1">Glutamyl-tRNA reductase</fullName>
        <shortName evidence="1">GluTR</shortName>
        <ecNumber evidence="1">1.2.1.70</ecNumber>
    </recommendedName>
</protein>
<proteinExistence type="inferred from homology"/>
<keyword id="KW-0521">NADP</keyword>
<keyword id="KW-0560">Oxidoreductase</keyword>
<keyword id="KW-0627">Porphyrin biosynthesis</keyword>
<evidence type="ECO:0000255" key="1">
    <source>
        <dbReference type="HAMAP-Rule" id="MF_00087"/>
    </source>
</evidence>
<dbReference type="EC" id="1.2.1.70" evidence="1"/>
<dbReference type="EMBL" id="CP001091">
    <property type="protein sequence ID" value="ACE61080.1"/>
    <property type="molecule type" value="Genomic_DNA"/>
</dbReference>
<dbReference type="RefSeq" id="WP_005596438.1">
    <property type="nucleotide sequence ID" value="NC_010939.1"/>
</dbReference>
<dbReference type="SMR" id="B3H0R8"/>
<dbReference type="GeneID" id="48598572"/>
<dbReference type="KEGG" id="apa:APP7_0428"/>
<dbReference type="HOGENOM" id="CLU_035113_2_2_6"/>
<dbReference type="UniPathway" id="UPA00251">
    <property type="reaction ID" value="UER00316"/>
</dbReference>
<dbReference type="Proteomes" id="UP000001226">
    <property type="component" value="Chromosome"/>
</dbReference>
<dbReference type="GO" id="GO:0008883">
    <property type="term" value="F:glutamyl-tRNA reductase activity"/>
    <property type="evidence" value="ECO:0007669"/>
    <property type="project" value="UniProtKB-UniRule"/>
</dbReference>
<dbReference type="GO" id="GO:0050661">
    <property type="term" value="F:NADP binding"/>
    <property type="evidence" value="ECO:0007669"/>
    <property type="project" value="InterPro"/>
</dbReference>
<dbReference type="GO" id="GO:0019353">
    <property type="term" value="P:protoporphyrinogen IX biosynthetic process from glutamate"/>
    <property type="evidence" value="ECO:0007669"/>
    <property type="project" value="TreeGrafter"/>
</dbReference>
<dbReference type="CDD" id="cd05213">
    <property type="entry name" value="NAD_bind_Glutamyl_tRNA_reduct"/>
    <property type="match status" value="1"/>
</dbReference>
<dbReference type="FunFam" id="3.30.460.30:FF:000001">
    <property type="entry name" value="Glutamyl-tRNA reductase"/>
    <property type="match status" value="1"/>
</dbReference>
<dbReference type="FunFam" id="3.40.50.720:FF:000031">
    <property type="entry name" value="Glutamyl-tRNA reductase"/>
    <property type="match status" value="1"/>
</dbReference>
<dbReference type="Gene3D" id="3.30.460.30">
    <property type="entry name" value="Glutamyl-tRNA reductase, N-terminal domain"/>
    <property type="match status" value="1"/>
</dbReference>
<dbReference type="Gene3D" id="3.40.50.720">
    <property type="entry name" value="NAD(P)-binding Rossmann-like Domain"/>
    <property type="match status" value="1"/>
</dbReference>
<dbReference type="HAMAP" id="MF_00087">
    <property type="entry name" value="Glu_tRNA_reductase"/>
    <property type="match status" value="1"/>
</dbReference>
<dbReference type="InterPro" id="IPR000343">
    <property type="entry name" value="4pyrrol_synth_GluRdtase"/>
</dbReference>
<dbReference type="InterPro" id="IPR015896">
    <property type="entry name" value="4pyrrol_synth_GluRdtase_dimer"/>
</dbReference>
<dbReference type="InterPro" id="IPR015895">
    <property type="entry name" value="4pyrrol_synth_GluRdtase_N"/>
</dbReference>
<dbReference type="InterPro" id="IPR018214">
    <property type="entry name" value="GluRdtase_CS"/>
</dbReference>
<dbReference type="InterPro" id="IPR036453">
    <property type="entry name" value="GluRdtase_dimer_dom_sf"/>
</dbReference>
<dbReference type="InterPro" id="IPR036343">
    <property type="entry name" value="GluRdtase_N_sf"/>
</dbReference>
<dbReference type="InterPro" id="IPR036291">
    <property type="entry name" value="NAD(P)-bd_dom_sf"/>
</dbReference>
<dbReference type="InterPro" id="IPR006151">
    <property type="entry name" value="Shikm_DH/Glu-tRNA_Rdtase"/>
</dbReference>
<dbReference type="NCBIfam" id="TIGR01035">
    <property type="entry name" value="hemA"/>
    <property type="match status" value="1"/>
</dbReference>
<dbReference type="PANTHER" id="PTHR43013">
    <property type="entry name" value="GLUTAMYL-TRNA REDUCTASE"/>
    <property type="match status" value="1"/>
</dbReference>
<dbReference type="PANTHER" id="PTHR43013:SF1">
    <property type="entry name" value="GLUTAMYL-TRNA REDUCTASE"/>
    <property type="match status" value="1"/>
</dbReference>
<dbReference type="Pfam" id="PF00745">
    <property type="entry name" value="GlutR_dimer"/>
    <property type="match status" value="1"/>
</dbReference>
<dbReference type="Pfam" id="PF05201">
    <property type="entry name" value="GlutR_N"/>
    <property type="match status" value="1"/>
</dbReference>
<dbReference type="Pfam" id="PF01488">
    <property type="entry name" value="Shikimate_DH"/>
    <property type="match status" value="1"/>
</dbReference>
<dbReference type="PIRSF" id="PIRSF000445">
    <property type="entry name" value="4pyrrol_synth_GluRdtase"/>
    <property type="match status" value="1"/>
</dbReference>
<dbReference type="SUPFAM" id="SSF69742">
    <property type="entry name" value="Glutamyl tRNA-reductase catalytic, N-terminal domain"/>
    <property type="match status" value="1"/>
</dbReference>
<dbReference type="SUPFAM" id="SSF69075">
    <property type="entry name" value="Glutamyl tRNA-reductase dimerization domain"/>
    <property type="match status" value="1"/>
</dbReference>
<dbReference type="SUPFAM" id="SSF51735">
    <property type="entry name" value="NAD(P)-binding Rossmann-fold domains"/>
    <property type="match status" value="1"/>
</dbReference>
<dbReference type="PROSITE" id="PS00747">
    <property type="entry name" value="GLUTR"/>
    <property type="match status" value="1"/>
</dbReference>
<organism>
    <name type="scientific">Actinobacillus pleuropneumoniae serotype 7 (strain AP76)</name>
    <dbReference type="NCBI Taxonomy" id="537457"/>
    <lineage>
        <taxon>Bacteria</taxon>
        <taxon>Pseudomonadati</taxon>
        <taxon>Pseudomonadota</taxon>
        <taxon>Gammaproteobacteria</taxon>
        <taxon>Pasteurellales</taxon>
        <taxon>Pasteurellaceae</taxon>
        <taxon>Actinobacillus</taxon>
    </lineage>
</organism>
<sequence length="436" mass="49451">MTILALGINHKTASVNLRSKVAFDDQKRQLAFEQIQHRALAESVVILSTCNRTELYFHNAEITPREEHEDNIAWREQCFEWFAEIHQLEHNELRECIYFKQNMEAARHLMRVACGLDSLILGEPQILGQVKQAYQYSENFYQSQNSHISTKLSRLFQRTFSTAKRVRSETEIGSSAVSVAYAACGLARQIFDNFGKLRFLLVGAGETIELVARYLIQHGAKNIMIANRTPQRAETLAERLNTPMQILSLSALQIGLNQADIVISSTGSPDMLISKEMVEIAQKQRQFDPMLLIDIAVPRDIDENAGELDAVYSYSVDDLQHIIQRNMAQREQAAEQAAQIVDEECKAFFEWLKQQQSSDLIKRYRQDAEQTRQELLAKALVALTSGQDSEKVLNELSYKLTNSLLHVPTQALQAMAKSGNSQGLQSFSKALKLEEQ</sequence>
<reference key="1">
    <citation type="submission" date="2008-06" db="EMBL/GenBank/DDBJ databases">
        <title>Genome and proteome analysis of A. pleuropneumoniae serotype 7.</title>
        <authorList>
            <person name="Linke B."/>
            <person name="Buettner F."/>
            <person name="Martinez-Arias R."/>
            <person name="Goesmann A."/>
            <person name="Baltes N."/>
            <person name="Tegetmeyer H."/>
            <person name="Singh M."/>
            <person name="Gerlach G.F."/>
        </authorList>
    </citation>
    <scope>NUCLEOTIDE SEQUENCE [LARGE SCALE GENOMIC DNA]</scope>
    <source>
        <strain>AP76</strain>
    </source>
</reference>